<evidence type="ECO:0000305" key="1"/>
<dbReference type="EMBL" id="DQ643392">
    <property type="protein sequence ID" value="ABF82127.1"/>
    <property type="molecule type" value="Genomic_DNA"/>
</dbReference>
<dbReference type="RefSeq" id="YP_654669.1">
    <property type="nucleotide sequence ID" value="NC_008187.1"/>
</dbReference>
<dbReference type="KEGG" id="vg:4156241"/>
<dbReference type="OrthoDB" id="15522at10239"/>
<dbReference type="Proteomes" id="UP000001358">
    <property type="component" value="Genome"/>
</dbReference>
<dbReference type="InterPro" id="IPR012337">
    <property type="entry name" value="RNaseH-like_sf"/>
</dbReference>
<dbReference type="SUPFAM" id="SSF53098">
    <property type="entry name" value="Ribonuclease H-like"/>
    <property type="match status" value="1"/>
</dbReference>
<organism>
    <name type="scientific">Invertebrate iridescent virus 3</name>
    <name type="common">IIV-3</name>
    <name type="synonym">Mosquito iridescent virus</name>
    <dbReference type="NCBI Taxonomy" id="345201"/>
    <lineage>
        <taxon>Viruses</taxon>
        <taxon>Varidnaviria</taxon>
        <taxon>Bamfordvirae</taxon>
        <taxon>Nucleocytoviricota</taxon>
        <taxon>Megaviricetes</taxon>
        <taxon>Pimascovirales</taxon>
        <taxon>Iridoviridae</taxon>
        <taxon>Betairidovirinae</taxon>
        <taxon>Chloriridovirus</taxon>
    </lineage>
</organism>
<organismHost>
    <name type="scientific">Aedes vexans</name>
    <name type="common">Inland floodwater mosquito</name>
    <name type="synonym">Culex vexans</name>
    <dbReference type="NCBI Taxonomy" id="7163"/>
</organismHost>
<organismHost>
    <name type="scientific">Culex territans</name>
    <dbReference type="NCBI Taxonomy" id="42431"/>
</organismHost>
<organismHost>
    <name type="scientific">Culiseta annulata</name>
    <dbReference type="NCBI Taxonomy" id="332058"/>
</organismHost>
<organismHost>
    <name type="scientific">Ochlerotatus sollicitans</name>
    <name type="common">eastern saltmarsh mosquito</name>
    <dbReference type="NCBI Taxonomy" id="310513"/>
</organismHost>
<organismHost>
    <name type="scientific">Ochlerotatus taeniorhynchus</name>
    <name type="common">Black salt marsh mosquito</name>
    <name type="synonym">Aedes taeniorhynchus</name>
    <dbReference type="NCBI Taxonomy" id="329105"/>
</organismHost>
<organismHost>
    <name type="scientific">Psorophora ferox</name>
    <dbReference type="NCBI Taxonomy" id="7183"/>
</organismHost>
<reference key="1">
    <citation type="journal article" date="2006" name="J. Virol.">
        <title>Genome of invertebrate iridescent virus type 3 (mosquito iridescent virus).</title>
        <authorList>
            <person name="Delhon G."/>
            <person name="Tulman E.R."/>
            <person name="Afonso C.L."/>
            <person name="Lu Z."/>
            <person name="Becnel J.J."/>
            <person name="Moser B.A."/>
            <person name="Kutish G.F."/>
            <person name="Rock D.L."/>
        </authorList>
    </citation>
    <scope>NUCLEOTIDE SEQUENCE [LARGE SCALE GENOMIC DNA]</scope>
</reference>
<name>VF170_IIV3</name>
<accession>Q196W3</accession>
<sequence length="205" mass="23481">MIASFDIGIKNFAFAVKRDGEFVLVENVNLLGDFVTKNDLNKTPKSALVEMMDRLNLDSKGQIKKTMVESILTAQKKSSPKQRAIDLGVKLFETMDRYRSFWTECDTFLVERQMVSNMQALKLSHYLEAYLKIHYPDKSVVNYSASNKTRKLGAPPLPTKPDRKRWTVEYAASILTGRHLDKFQSCPKKDDLADVVCMIEAYQKM</sequence>
<proteinExistence type="inferred from homology"/>
<comment type="similarity">
    <text evidence="1">Belongs to the IIV-6 170L family.</text>
</comment>
<feature type="chain" id="PRO_0000377930" description="Uncharacterized protein 97L">
    <location>
        <begin position="1"/>
        <end position="205"/>
    </location>
</feature>
<protein>
    <recommendedName>
        <fullName>Uncharacterized protein 97L</fullName>
    </recommendedName>
</protein>
<gene>
    <name type="ORF">IIV3-097L</name>
</gene>
<keyword id="KW-1185">Reference proteome</keyword>